<sequence>MAGHSKWANIQHKKARQDAKRGKIFTRLIKEITVAARMGGGDPGANPRLRLALEKAAENNMPKDNVQRAIDKGTGNLEGVEYIELRYEGYGIGGAALMVDCLTDNKTRTVADVRHAFTKNGGNLGTDGCVAFNFVHQGYLVFEPGVDEDALMEAALEAGAEDVVTNDDGSIEVITAPNDWAGVKSALEAAGYKSVDGDVTMRAQNETELSGDDAVKMQKLIDALEDLDDVQDVYTSAVLNLD</sequence>
<name>Y1902_NEIMA</name>
<gene>
    <name type="ordered locus">NMA1902</name>
</gene>
<comment type="subcellular location">
    <subcellularLocation>
        <location evidence="1">Cytoplasm</location>
    </subcellularLocation>
</comment>
<comment type="similarity">
    <text evidence="1">Belongs to the TACO1 family.</text>
</comment>
<organism>
    <name type="scientific">Neisseria meningitidis serogroup A / serotype 4A (strain DSM 15465 / Z2491)</name>
    <dbReference type="NCBI Taxonomy" id="122587"/>
    <lineage>
        <taxon>Bacteria</taxon>
        <taxon>Pseudomonadati</taxon>
        <taxon>Pseudomonadota</taxon>
        <taxon>Betaproteobacteria</taxon>
        <taxon>Neisseriales</taxon>
        <taxon>Neisseriaceae</taxon>
        <taxon>Neisseria</taxon>
    </lineage>
</organism>
<dbReference type="EMBL" id="AL157959">
    <property type="protein sequence ID" value="CAM09019.1"/>
    <property type="molecule type" value="Genomic_DNA"/>
</dbReference>
<dbReference type="PIR" id="F81817">
    <property type="entry name" value="F81817"/>
</dbReference>
<dbReference type="RefSeq" id="WP_002212681.1">
    <property type="nucleotide sequence ID" value="NC_003116.1"/>
</dbReference>
<dbReference type="SMR" id="Q9JTB0"/>
<dbReference type="EnsemblBacteria" id="CAM09019">
    <property type="protein sequence ID" value="CAM09019"/>
    <property type="gene ID" value="NMA1902"/>
</dbReference>
<dbReference type="KEGG" id="nma:NMA1902"/>
<dbReference type="HOGENOM" id="CLU_062974_2_2_4"/>
<dbReference type="Proteomes" id="UP000000626">
    <property type="component" value="Chromosome"/>
</dbReference>
<dbReference type="GO" id="GO:0005829">
    <property type="term" value="C:cytosol"/>
    <property type="evidence" value="ECO:0007669"/>
    <property type="project" value="TreeGrafter"/>
</dbReference>
<dbReference type="GO" id="GO:0003677">
    <property type="term" value="F:DNA binding"/>
    <property type="evidence" value="ECO:0007669"/>
    <property type="project" value="UniProtKB-UniRule"/>
</dbReference>
<dbReference type="GO" id="GO:0006355">
    <property type="term" value="P:regulation of DNA-templated transcription"/>
    <property type="evidence" value="ECO:0007669"/>
    <property type="project" value="UniProtKB-UniRule"/>
</dbReference>
<dbReference type="FunFam" id="1.10.10.200:FF:000001">
    <property type="entry name" value="Probable transcriptional regulatory protein YebC"/>
    <property type="match status" value="1"/>
</dbReference>
<dbReference type="FunFam" id="3.30.70.980:FF:000002">
    <property type="entry name" value="Probable transcriptional regulatory protein YebC"/>
    <property type="match status" value="1"/>
</dbReference>
<dbReference type="Gene3D" id="1.10.10.200">
    <property type="match status" value="1"/>
</dbReference>
<dbReference type="Gene3D" id="3.30.70.980">
    <property type="match status" value="2"/>
</dbReference>
<dbReference type="HAMAP" id="MF_00693">
    <property type="entry name" value="Transcrip_reg_TACO1"/>
    <property type="match status" value="1"/>
</dbReference>
<dbReference type="InterPro" id="IPR017856">
    <property type="entry name" value="Integrase-like_N"/>
</dbReference>
<dbReference type="InterPro" id="IPR048300">
    <property type="entry name" value="TACO1_YebC-like_2nd/3rd_dom"/>
</dbReference>
<dbReference type="InterPro" id="IPR049083">
    <property type="entry name" value="TACO1_YebC_N"/>
</dbReference>
<dbReference type="InterPro" id="IPR002876">
    <property type="entry name" value="Transcrip_reg_TACO1-like"/>
</dbReference>
<dbReference type="InterPro" id="IPR026564">
    <property type="entry name" value="Transcrip_reg_TACO1-like_dom3"/>
</dbReference>
<dbReference type="InterPro" id="IPR029072">
    <property type="entry name" value="YebC-like"/>
</dbReference>
<dbReference type="NCBIfam" id="NF001030">
    <property type="entry name" value="PRK00110.1"/>
    <property type="match status" value="1"/>
</dbReference>
<dbReference type="NCBIfam" id="NF009044">
    <property type="entry name" value="PRK12378.1"/>
    <property type="match status" value="1"/>
</dbReference>
<dbReference type="NCBIfam" id="TIGR01033">
    <property type="entry name" value="YebC/PmpR family DNA-binding transcriptional regulator"/>
    <property type="match status" value="1"/>
</dbReference>
<dbReference type="PANTHER" id="PTHR12532:SF6">
    <property type="entry name" value="TRANSCRIPTIONAL REGULATORY PROTEIN YEBC-RELATED"/>
    <property type="match status" value="1"/>
</dbReference>
<dbReference type="PANTHER" id="PTHR12532">
    <property type="entry name" value="TRANSLATIONAL ACTIVATOR OF CYTOCHROME C OXIDASE 1"/>
    <property type="match status" value="1"/>
</dbReference>
<dbReference type="Pfam" id="PF20772">
    <property type="entry name" value="TACO1_YebC_N"/>
    <property type="match status" value="1"/>
</dbReference>
<dbReference type="Pfam" id="PF01709">
    <property type="entry name" value="Transcrip_reg"/>
    <property type="match status" value="1"/>
</dbReference>
<dbReference type="SUPFAM" id="SSF75625">
    <property type="entry name" value="YebC-like"/>
    <property type="match status" value="1"/>
</dbReference>
<evidence type="ECO:0000255" key="1">
    <source>
        <dbReference type="HAMAP-Rule" id="MF_00693"/>
    </source>
</evidence>
<feature type="chain" id="PRO_0000175855" description="Probable transcriptional regulatory protein NMA1902">
    <location>
        <begin position="1"/>
        <end position="242"/>
    </location>
</feature>
<proteinExistence type="inferred from homology"/>
<keyword id="KW-0963">Cytoplasm</keyword>
<keyword id="KW-0238">DNA-binding</keyword>
<keyword id="KW-0804">Transcription</keyword>
<keyword id="KW-0805">Transcription regulation</keyword>
<protein>
    <recommendedName>
        <fullName evidence="1">Probable transcriptional regulatory protein NMA1902</fullName>
    </recommendedName>
</protein>
<accession>Q9JTB0</accession>
<accession>A1ITA6</accession>
<reference key="1">
    <citation type="journal article" date="2000" name="Nature">
        <title>Complete DNA sequence of a serogroup A strain of Neisseria meningitidis Z2491.</title>
        <authorList>
            <person name="Parkhill J."/>
            <person name="Achtman M."/>
            <person name="James K.D."/>
            <person name="Bentley S.D."/>
            <person name="Churcher C.M."/>
            <person name="Klee S.R."/>
            <person name="Morelli G."/>
            <person name="Basham D."/>
            <person name="Brown D."/>
            <person name="Chillingworth T."/>
            <person name="Davies R.M."/>
            <person name="Davis P."/>
            <person name="Devlin K."/>
            <person name="Feltwell T."/>
            <person name="Hamlin N."/>
            <person name="Holroyd S."/>
            <person name="Jagels K."/>
            <person name="Leather S."/>
            <person name="Moule S."/>
            <person name="Mungall K.L."/>
            <person name="Quail M.A."/>
            <person name="Rajandream M.A."/>
            <person name="Rutherford K.M."/>
            <person name="Simmonds M."/>
            <person name="Skelton J."/>
            <person name="Whitehead S."/>
            <person name="Spratt B.G."/>
            <person name="Barrell B.G."/>
        </authorList>
    </citation>
    <scope>NUCLEOTIDE SEQUENCE [LARGE SCALE GENOMIC DNA]</scope>
    <source>
        <strain>DSM 15465 / Z2491</strain>
    </source>
</reference>